<organism>
    <name type="scientific">Gallus gallus</name>
    <name type="common">Chicken</name>
    <dbReference type="NCBI Taxonomy" id="9031"/>
    <lineage>
        <taxon>Eukaryota</taxon>
        <taxon>Metazoa</taxon>
        <taxon>Chordata</taxon>
        <taxon>Craniata</taxon>
        <taxon>Vertebrata</taxon>
        <taxon>Euteleostomi</taxon>
        <taxon>Archelosauria</taxon>
        <taxon>Archosauria</taxon>
        <taxon>Dinosauria</taxon>
        <taxon>Saurischia</taxon>
        <taxon>Theropoda</taxon>
        <taxon>Coelurosauria</taxon>
        <taxon>Aves</taxon>
        <taxon>Neognathae</taxon>
        <taxon>Galloanserae</taxon>
        <taxon>Galliformes</taxon>
        <taxon>Phasianidae</taxon>
        <taxon>Phasianinae</taxon>
        <taxon>Gallus</taxon>
    </lineage>
</organism>
<evidence type="ECO:0000250" key="1">
    <source>
        <dbReference type="UniProtKB" id="P33309"/>
    </source>
</evidence>
<evidence type="ECO:0000250" key="2">
    <source>
        <dbReference type="UniProtKB" id="Q9BRX2"/>
    </source>
</evidence>
<evidence type="ECO:0000305" key="3"/>
<dbReference type="EMBL" id="AJ720283">
    <property type="protein sequence ID" value="CAG31942.1"/>
    <property type="molecule type" value="mRNA"/>
</dbReference>
<dbReference type="RefSeq" id="NP_001026763.1">
    <property type="nucleotide sequence ID" value="NM_001031592.1"/>
</dbReference>
<dbReference type="SMR" id="Q5ZK01"/>
<dbReference type="BioGRID" id="688593">
    <property type="interactions" value="1"/>
</dbReference>
<dbReference type="FunCoup" id="Q5ZK01">
    <property type="interactions" value="574"/>
</dbReference>
<dbReference type="GeneID" id="430689"/>
<dbReference type="KEGG" id="gga:430689"/>
<dbReference type="CTD" id="53918"/>
<dbReference type="VEuPathDB" id="HostDB:geneid_430689"/>
<dbReference type="InParanoid" id="Q5ZK01"/>
<dbReference type="OrthoDB" id="10249111at2759"/>
<dbReference type="PhylomeDB" id="Q5ZK01"/>
<dbReference type="PRO" id="PR:Q5ZK01"/>
<dbReference type="Proteomes" id="UP000000539">
    <property type="component" value="Unassembled WGS sequence"/>
</dbReference>
<dbReference type="GO" id="GO:0005737">
    <property type="term" value="C:cytoplasm"/>
    <property type="evidence" value="ECO:0000318"/>
    <property type="project" value="GO_Central"/>
</dbReference>
<dbReference type="GO" id="GO:1990533">
    <property type="term" value="C:Dom34-Hbs1 complex"/>
    <property type="evidence" value="ECO:0000250"/>
    <property type="project" value="UniProtKB"/>
</dbReference>
<dbReference type="GO" id="GO:0046872">
    <property type="term" value="F:metal ion binding"/>
    <property type="evidence" value="ECO:0007669"/>
    <property type="project" value="UniProtKB-KW"/>
</dbReference>
<dbReference type="GO" id="GO:0043022">
    <property type="term" value="F:ribosome binding"/>
    <property type="evidence" value="ECO:0000250"/>
    <property type="project" value="UniProtKB"/>
</dbReference>
<dbReference type="GO" id="GO:0051301">
    <property type="term" value="P:cell division"/>
    <property type="evidence" value="ECO:0007669"/>
    <property type="project" value="UniProtKB-KW"/>
</dbReference>
<dbReference type="GO" id="GO:0070651">
    <property type="term" value="P:nonfunctional rRNA decay"/>
    <property type="evidence" value="ECO:0000318"/>
    <property type="project" value="GO_Central"/>
</dbReference>
<dbReference type="GO" id="GO:0070966">
    <property type="term" value="P:nuclear-transcribed mRNA catabolic process, no-go decay"/>
    <property type="evidence" value="ECO:0000250"/>
    <property type="project" value="UniProtKB"/>
</dbReference>
<dbReference type="GO" id="GO:0070481">
    <property type="term" value="P:nuclear-transcribed mRNA catabolic process, non-stop decay"/>
    <property type="evidence" value="ECO:0007669"/>
    <property type="project" value="InterPro"/>
</dbReference>
<dbReference type="GO" id="GO:0006417">
    <property type="term" value="P:regulation of translation"/>
    <property type="evidence" value="ECO:0007669"/>
    <property type="project" value="UniProtKB-KW"/>
</dbReference>
<dbReference type="GO" id="GO:0072344">
    <property type="term" value="P:rescue of stalled ribosome"/>
    <property type="evidence" value="ECO:0000250"/>
    <property type="project" value="UniProtKB"/>
</dbReference>
<dbReference type="GO" id="GO:0032790">
    <property type="term" value="P:ribosome disassembly"/>
    <property type="evidence" value="ECO:0000250"/>
    <property type="project" value="UniProtKB"/>
</dbReference>
<dbReference type="GO" id="GO:0071025">
    <property type="term" value="P:RNA surveillance"/>
    <property type="evidence" value="ECO:0007669"/>
    <property type="project" value="InterPro"/>
</dbReference>
<dbReference type="FunFam" id="2.30.30.870:FF:000001">
    <property type="entry name" value="Protein pelota homolog"/>
    <property type="match status" value="1"/>
</dbReference>
<dbReference type="FunFam" id="3.30.1330.30:FF:000008">
    <property type="entry name" value="Protein pelota homolog"/>
    <property type="match status" value="1"/>
</dbReference>
<dbReference type="FunFam" id="3.30.420.60:FF:000002">
    <property type="entry name" value="Protein pelota homolog"/>
    <property type="match status" value="1"/>
</dbReference>
<dbReference type="Gene3D" id="3.30.1330.30">
    <property type="match status" value="1"/>
</dbReference>
<dbReference type="Gene3D" id="3.30.420.60">
    <property type="entry name" value="eRF1 domain 2"/>
    <property type="match status" value="1"/>
</dbReference>
<dbReference type="Gene3D" id="2.30.30.870">
    <property type="entry name" value="Pelota, domain A"/>
    <property type="match status" value="1"/>
</dbReference>
<dbReference type="InterPro" id="IPR042226">
    <property type="entry name" value="eFR1_2_sf"/>
</dbReference>
<dbReference type="InterPro" id="IPR005140">
    <property type="entry name" value="eRF1_1_Pelota"/>
</dbReference>
<dbReference type="InterPro" id="IPR005141">
    <property type="entry name" value="eRF1_2"/>
</dbReference>
<dbReference type="InterPro" id="IPR005142">
    <property type="entry name" value="eRF1_3"/>
</dbReference>
<dbReference type="InterPro" id="IPR038069">
    <property type="entry name" value="Pelota/DOM34_N"/>
</dbReference>
<dbReference type="InterPro" id="IPR029064">
    <property type="entry name" value="Ribosomal_eL30-like_sf"/>
</dbReference>
<dbReference type="InterPro" id="IPR004405">
    <property type="entry name" value="Transl-rel_pelota"/>
</dbReference>
<dbReference type="NCBIfam" id="TIGR00111">
    <property type="entry name" value="pelota"/>
    <property type="match status" value="1"/>
</dbReference>
<dbReference type="PANTHER" id="PTHR10853">
    <property type="entry name" value="PELOTA"/>
    <property type="match status" value="1"/>
</dbReference>
<dbReference type="PANTHER" id="PTHR10853:SF0">
    <property type="entry name" value="PROTEIN PELOTA HOMOLOG"/>
    <property type="match status" value="1"/>
</dbReference>
<dbReference type="Pfam" id="PF03463">
    <property type="entry name" value="eRF1_1"/>
    <property type="match status" value="1"/>
</dbReference>
<dbReference type="Pfam" id="PF03464">
    <property type="entry name" value="eRF1_2"/>
    <property type="match status" value="1"/>
</dbReference>
<dbReference type="Pfam" id="PF03465">
    <property type="entry name" value="eRF1_3"/>
    <property type="match status" value="1"/>
</dbReference>
<dbReference type="SMART" id="SM01194">
    <property type="entry name" value="eRF1_1"/>
    <property type="match status" value="1"/>
</dbReference>
<dbReference type="SUPFAM" id="SSF159065">
    <property type="entry name" value="Dom34/Pelota N-terminal domain-like"/>
    <property type="match status" value="1"/>
</dbReference>
<dbReference type="SUPFAM" id="SSF55315">
    <property type="entry name" value="L30e-like"/>
    <property type="match status" value="1"/>
</dbReference>
<dbReference type="SUPFAM" id="SSF53137">
    <property type="entry name" value="Translational machinery components"/>
    <property type="match status" value="1"/>
</dbReference>
<reference key="1">
    <citation type="journal article" date="2005" name="Genome Biol.">
        <title>Full-length cDNAs from chicken bursal lymphocytes to facilitate gene function analysis.</title>
        <authorList>
            <person name="Caldwell R.B."/>
            <person name="Kierzek A.M."/>
            <person name="Arakawa H."/>
            <person name="Bezzubov Y."/>
            <person name="Zaim J."/>
            <person name="Fiedler P."/>
            <person name="Kutter S."/>
            <person name="Blagodatski A."/>
            <person name="Kostovska D."/>
            <person name="Koter M."/>
            <person name="Plachy J."/>
            <person name="Carninci P."/>
            <person name="Hayashizaki Y."/>
            <person name="Buerstedde J.-M."/>
        </authorList>
    </citation>
    <scope>NUCLEOTIDE SEQUENCE [LARGE SCALE MRNA]</scope>
    <source>
        <strain>CB</strain>
        <tissue>Bursa of Fabricius</tissue>
    </source>
</reference>
<feature type="chain" id="PRO_0000232837" description="Protein pelota homolog">
    <location>
        <begin position="1"/>
        <end position="385"/>
    </location>
</feature>
<comment type="function">
    <text evidence="2">Component of the Pelota-HBS1L complex, a complex that recognizes stalled ribosomes and triggers the No-Go Decay (NGD) pathway. In the Pelota-HBS1L complex, PELO recognizes ribosomes stalled at the 3' end of an mRNA and engages stalled ribosomes by destabilizing mRNA in the mRNA channel. Following mRNA extraction from stalled ribosomes by the SKI complex, the Pelota-HBS1L complex promotes recruitment of ABCE1, which drives the disassembly of stalled ribosomes, followed by degradation of damaged mRNAs as part of the NGD pathway.</text>
</comment>
<comment type="cofactor">
    <cofactor evidence="1">
        <name>a divalent metal cation</name>
        <dbReference type="ChEBI" id="CHEBI:60240"/>
    </cofactor>
</comment>
<comment type="subunit">
    <text evidence="2">Component of the Pelota-HBS1L complex, also named Dom34-Hbs1 complex, composed of PELO and HBS1L.</text>
</comment>
<comment type="subcellular location">
    <subcellularLocation>
        <location evidence="2">Cytoplasm</location>
    </subcellularLocation>
</comment>
<comment type="similarity">
    <text evidence="3">Belongs to the eukaryotic release factor 1 family. Pelota subfamily.</text>
</comment>
<gene>
    <name type="primary">PELO</name>
    <name type="ORF">RCJMB04_14b4</name>
</gene>
<proteinExistence type="evidence at transcript level"/>
<name>PELO_CHICK</name>
<keyword id="KW-0131">Cell cycle</keyword>
<keyword id="KW-0132">Cell division</keyword>
<keyword id="KW-0963">Cytoplasm</keyword>
<keyword id="KW-0479">Metal-binding</keyword>
<keyword id="KW-1185">Reference proteome</keyword>
<keyword id="KW-0810">Translation regulation</keyword>
<protein>
    <recommendedName>
        <fullName>Protein pelota homolog</fullName>
    </recommendedName>
</protein>
<sequence>MKLVRKDLEKDNAGQVTLIPEEPEDMWHTYNLLQVGDSLRASTIRKVQTESSTGSVGSNRIRTTLTLCVEAIDFDSQACQLRVKGTNIQENEYVKMGAYHTIELEPNRQFTLAKKQWDSVVLERIEQACDPAWNADVAAVVMQEGLAHVCLVTPSMTLTRAKVEVNIPRKRKGNCSQHDRALERFYEQVVQAIQRHINFEVVKCVLVASPGFVREQFCDYMFQQAVKTDNKLLLENRSKFLQVHSSSGHKYVLKEALCDPAVTSRLSDTKAAGEVKALDDFYKMLQHEPDRAFYGLKHVEKANEAMAIDTLLISDELFRHQDVATRARYVKLVDSVRENMGTVRIFSSLHVSGEQLGQLTGVAAILRFPVAELSDQEDESSSEED</sequence>
<accession>Q5ZK01</accession>